<name>RPB2_FRG3G</name>
<keyword id="KW-0240">DNA-directed RNA polymerase</keyword>
<keyword id="KW-0460">Magnesium</keyword>
<keyword id="KW-0479">Metal-binding</keyword>
<keyword id="KW-0548">Nucleotidyltransferase</keyword>
<keyword id="KW-1185">Reference proteome</keyword>
<keyword id="KW-0804">Transcription</keyword>
<keyword id="KW-0808">Transferase</keyword>
<keyword id="KW-0862">Zinc</keyword>
<keyword id="KW-0863">Zinc-finger</keyword>
<comment type="function">
    <text evidence="1">Component of the DNA-dependent RNA polymerase that catalyzes the transcription of DNA into RNA using the four ribonucleoside triphosphates as substrates. Second largest component of RNA polymerase II which synthesizes mRNA precursors and many functional non-coding RNAs. Proposed to contribute to the polymerase catalytic activity and forms the polymerase active center together with the largest subunit (By similarity).</text>
</comment>
<comment type="catalytic activity">
    <reaction>
        <text>RNA(n) + a ribonucleoside 5'-triphosphate = RNA(n+1) + diphosphate</text>
        <dbReference type="Rhea" id="RHEA:21248"/>
        <dbReference type="Rhea" id="RHEA-COMP:14527"/>
        <dbReference type="Rhea" id="RHEA-COMP:17342"/>
        <dbReference type="ChEBI" id="CHEBI:33019"/>
        <dbReference type="ChEBI" id="CHEBI:61557"/>
        <dbReference type="ChEBI" id="CHEBI:140395"/>
        <dbReference type="EC" id="2.7.7.6"/>
    </reaction>
</comment>
<comment type="similarity">
    <text evidence="4">Belongs to the RNA polymerase beta chain family.</text>
</comment>
<gene>
    <name type="ORF">FV3-062L</name>
</gene>
<evidence type="ECO:0000250" key="1"/>
<evidence type="ECO:0000255" key="2"/>
<evidence type="ECO:0000256" key="3">
    <source>
        <dbReference type="SAM" id="MobiDB-lite"/>
    </source>
</evidence>
<evidence type="ECO:0000305" key="4"/>
<sequence length="1221" mass="133260">MSRGMTTEGASLTAAASSSASTWLTESTPSTPSSSGSSYPALSTFSSCSNSASSPDEADPMSEMSPKISVASMILLKDMEEFLHLYVSSANMHPSNFVRHHIESFDDMLWNEFPAMVAREKPVSVKGYRVKFGTVRYEPPCPDGKPWEKLTPAMARRTDATYHSAAVCDLTVTDPKGLETVYPRLELCKIPVMVGSAVCWTRTEGSPLPGECPSDPGGYFIIKGKERVVVPHIRPAYDQPCVYKNGDGWLCEFRSVNRETRQTVLVQAKTDCRRKLEFSLPYIKQYVPVGLVFKALGKTAREAVAMCGLGSFLGDEVSCRTVHHQSMAALLMEQHASAPEDPVADLAKHVPDGRSVYSKQAEGAKQAKYADRASVEEDRNAKGSKEDYVRHVLAGEIFLHGGDAAEHLGWMVKRMADAASGIGTCTDRDDLANKRVDATGPLIAFLLDGLLKQYVKLFVKSAGCQKNLCPYTVLQNSMVMTNSLHMCFATGNWTVKRLGPPSYVRVGVSQVLSNNNYGARVSHLRRIMHAVSFRGKNIRMRQLHSSHYGFLCPYETPEGEKVGIVLNMAEGAGFSLETPREVVLATVRLGKGLPGFFEGAPARLAWSGAAGSASVDVDGVLCGVTGDPVGFVREARLCLPGVSVVWKKVEREIHLLGCQGRFVRRVLDPEGIRGSGYDSPPAPEERDIEMDPAPSSSPSDSLPCPPGVYVCAQELSVCSLGDGEYADPPASEILTDAMSSVIPFYDHTQSPRNAYQSNMGKQAIGFPAVNCSDRYDATLHRLDYPQKSLVDSRSVKRLGFDEMAHGALPVVAIMTAGGFNQEDSVVLNASSLDRGLFSCVTYRTVSCADKRRTKYDSEVVCLPDWGLRNREWDYDLLGDDGVIDPSCAGALARRVEGKRKAAKRPAGQRTGGGPAGLCDALWIPAGTVLVGKVSHSLGPGGNPMRRDVSLTVKQSEEGYLDRVTVDVDSDGKKLVKVRLRTPRHPEMGDKFASFTAQKGTCGAVLTQEDMPFDKDGVVPDLIINPHAFPSRMTVNYLLQMCFGTAACKLGKTYDATAFEREDVVRDIAEAAKEAGIDCWDSVLHSGSTGRRLPTKIFMAPCPYQRLKHMVSGKMHSRTHGPTDALTRQPVAGRSREGGIKIGEMEQWCKISHGASESLKESVYDMSDKYEVPVCKECGRISDHFEYCRMCDATDMSLVKLPYTTKILFQELRSIGISIAFK</sequence>
<protein>
    <recommendedName>
        <fullName>Putative DNA-directed RNA polymerase II subunit RPB2 homolog</fullName>
        <ecNumber>2.7.7.6</ecNumber>
    </recommendedName>
</protein>
<reference key="1">
    <citation type="journal article" date="2004" name="Virology">
        <title>Comparative genomic analyses of frog virus 3, type species of the genus Ranavirus (family Iridoviridae).</title>
        <authorList>
            <person name="Tan W.G."/>
            <person name="Barkman T.J."/>
            <person name="Gregory Chinchar V."/>
            <person name="Essani K."/>
        </authorList>
    </citation>
    <scope>NUCLEOTIDE SEQUENCE [LARGE SCALE GENOMIC DNA]</scope>
</reference>
<feature type="chain" id="PRO_0000410574" description="Putative DNA-directed RNA polymerase II subunit RPB2 homolog">
    <location>
        <begin position="1"/>
        <end position="1221"/>
    </location>
</feature>
<feature type="zinc finger region" description="C4-type" evidence="2">
    <location>
        <begin position="1174"/>
        <end position="1190"/>
    </location>
</feature>
<feature type="region of interest" description="Disordered" evidence="3">
    <location>
        <begin position="1"/>
        <end position="63"/>
    </location>
</feature>
<feature type="region of interest" description="Disordered" evidence="3">
    <location>
        <begin position="673"/>
        <end position="701"/>
    </location>
</feature>
<feature type="compositionally biased region" description="Low complexity" evidence="3">
    <location>
        <begin position="1"/>
        <end position="54"/>
    </location>
</feature>
<feature type="compositionally biased region" description="Low complexity" evidence="3">
    <location>
        <begin position="692"/>
        <end position="701"/>
    </location>
</feature>
<feature type="binding site" evidence="1">
    <location>
        <position position="823"/>
    </location>
    <ligand>
        <name>Mg(2+)</name>
        <dbReference type="ChEBI" id="CHEBI:18420"/>
        <note>ligand shared with DNA-directed RNA polymerase largest subunit</note>
    </ligand>
</feature>
<feature type="binding site" evidence="1">
    <location>
        <position position="1174"/>
    </location>
    <ligand>
        <name>Zn(2+)</name>
        <dbReference type="ChEBI" id="CHEBI:29105"/>
    </ligand>
</feature>
<feature type="binding site" evidence="1">
    <location>
        <position position="1177"/>
    </location>
    <ligand>
        <name>Zn(2+)</name>
        <dbReference type="ChEBI" id="CHEBI:29105"/>
    </ligand>
</feature>
<feature type="binding site" evidence="1">
    <location>
        <position position="1187"/>
    </location>
    <ligand>
        <name>Zn(2+)</name>
        <dbReference type="ChEBI" id="CHEBI:29105"/>
    </ligand>
</feature>
<feature type="binding site" evidence="1">
    <location>
        <position position="1190"/>
    </location>
    <ligand>
        <name>Zn(2+)</name>
        <dbReference type="ChEBI" id="CHEBI:29105"/>
    </ligand>
</feature>
<accession>Q6GZR3</accession>
<organismHost>
    <name type="scientific">Dryophytes versicolor</name>
    <name type="common">chameleon treefrog</name>
    <dbReference type="NCBI Taxonomy" id="30343"/>
</organismHost>
<organismHost>
    <name type="scientific">Lithobates pipiens</name>
    <name type="common">Northern leopard frog</name>
    <name type="synonym">Rana pipiens</name>
    <dbReference type="NCBI Taxonomy" id="8404"/>
</organismHost>
<organismHost>
    <name type="scientific">Lithobates sylvaticus</name>
    <name type="common">Wood frog</name>
    <name type="synonym">Rana sylvatica</name>
    <dbReference type="NCBI Taxonomy" id="45438"/>
</organismHost>
<organismHost>
    <name type="scientific">Notophthalmus viridescens</name>
    <name type="common">Eastern newt</name>
    <name type="synonym">Triturus viridescens</name>
    <dbReference type="NCBI Taxonomy" id="8316"/>
</organismHost>
<dbReference type="EC" id="2.7.7.6"/>
<dbReference type="EMBL" id="AY548484">
    <property type="protein sequence ID" value="AAT09722.1"/>
    <property type="molecule type" value="Genomic_DNA"/>
</dbReference>
<dbReference type="RefSeq" id="YP_031641.1">
    <property type="nucleotide sequence ID" value="NC_005946.1"/>
</dbReference>
<dbReference type="SMR" id="Q6GZR3"/>
<dbReference type="KEGG" id="vg:2947762"/>
<dbReference type="Proteomes" id="UP000008770">
    <property type="component" value="Segment"/>
</dbReference>
<dbReference type="GO" id="GO:0000428">
    <property type="term" value="C:DNA-directed RNA polymerase complex"/>
    <property type="evidence" value="ECO:0007669"/>
    <property type="project" value="UniProtKB-KW"/>
</dbReference>
<dbReference type="GO" id="GO:0003677">
    <property type="term" value="F:DNA binding"/>
    <property type="evidence" value="ECO:0007669"/>
    <property type="project" value="InterPro"/>
</dbReference>
<dbReference type="GO" id="GO:0003899">
    <property type="term" value="F:DNA-directed RNA polymerase activity"/>
    <property type="evidence" value="ECO:0007669"/>
    <property type="project" value="UniProtKB-EC"/>
</dbReference>
<dbReference type="GO" id="GO:0032549">
    <property type="term" value="F:ribonucleoside binding"/>
    <property type="evidence" value="ECO:0007669"/>
    <property type="project" value="InterPro"/>
</dbReference>
<dbReference type="GO" id="GO:0008270">
    <property type="term" value="F:zinc ion binding"/>
    <property type="evidence" value="ECO:0007669"/>
    <property type="project" value="UniProtKB-KW"/>
</dbReference>
<dbReference type="GO" id="GO:0006351">
    <property type="term" value="P:DNA-templated transcription"/>
    <property type="evidence" value="ECO:0007669"/>
    <property type="project" value="InterPro"/>
</dbReference>
<dbReference type="CDD" id="cd00653">
    <property type="entry name" value="RNA_pol_B_RPB2"/>
    <property type="match status" value="1"/>
</dbReference>
<dbReference type="Gene3D" id="2.40.50.150">
    <property type="match status" value="1"/>
</dbReference>
<dbReference type="Gene3D" id="3.90.1100.10">
    <property type="match status" value="2"/>
</dbReference>
<dbReference type="Gene3D" id="2.40.270.10">
    <property type="entry name" value="DNA-directed RNA polymerase, subunit 2, domain 6"/>
    <property type="match status" value="1"/>
</dbReference>
<dbReference type="Gene3D" id="3.90.1800.10">
    <property type="entry name" value="RNA polymerase alpha subunit dimerisation domain"/>
    <property type="match status" value="1"/>
</dbReference>
<dbReference type="Gene3D" id="3.90.1110.10">
    <property type="entry name" value="RNA polymerase Rpb2, domain 2"/>
    <property type="match status" value="1"/>
</dbReference>
<dbReference type="InterPro" id="IPR015712">
    <property type="entry name" value="DNA-dir_RNA_pol_su2"/>
</dbReference>
<dbReference type="InterPro" id="IPR007120">
    <property type="entry name" value="DNA-dir_RNAP_su2_dom"/>
</dbReference>
<dbReference type="InterPro" id="IPR037033">
    <property type="entry name" value="DNA-dir_RNAP_su2_hyb_sf"/>
</dbReference>
<dbReference type="InterPro" id="IPR007121">
    <property type="entry name" value="RNA_pol_bsu_CS"/>
</dbReference>
<dbReference type="InterPro" id="IPR007644">
    <property type="entry name" value="RNA_pol_bsu_protrusion"/>
</dbReference>
<dbReference type="InterPro" id="IPR037034">
    <property type="entry name" value="RNA_pol_Rpb2_2_sf"/>
</dbReference>
<dbReference type="InterPro" id="IPR007645">
    <property type="entry name" value="RNA_pol_Rpb2_3"/>
</dbReference>
<dbReference type="InterPro" id="IPR007641">
    <property type="entry name" value="RNA_pol_Rpb2_7"/>
</dbReference>
<dbReference type="InterPro" id="IPR014724">
    <property type="entry name" value="RNA_pol_RPB2_OB-fold"/>
</dbReference>
<dbReference type="PANTHER" id="PTHR20856">
    <property type="entry name" value="DNA-DIRECTED RNA POLYMERASE I SUBUNIT 2"/>
    <property type="match status" value="1"/>
</dbReference>
<dbReference type="Pfam" id="PF04563">
    <property type="entry name" value="RNA_pol_Rpb2_1"/>
    <property type="match status" value="1"/>
</dbReference>
<dbReference type="Pfam" id="PF04565">
    <property type="entry name" value="RNA_pol_Rpb2_3"/>
    <property type="match status" value="1"/>
</dbReference>
<dbReference type="Pfam" id="PF00562">
    <property type="entry name" value="RNA_pol_Rpb2_6"/>
    <property type="match status" value="2"/>
</dbReference>
<dbReference type="Pfam" id="PF04560">
    <property type="entry name" value="RNA_pol_Rpb2_7"/>
    <property type="match status" value="1"/>
</dbReference>
<dbReference type="SUPFAM" id="SSF64484">
    <property type="entry name" value="beta and beta-prime subunits of DNA dependent RNA-polymerase"/>
    <property type="match status" value="1"/>
</dbReference>
<dbReference type="PROSITE" id="PS01166">
    <property type="entry name" value="RNA_POL_BETA"/>
    <property type="match status" value="1"/>
</dbReference>
<proteinExistence type="inferred from homology"/>
<organism>
    <name type="scientific">Frog virus 3 (isolate Goorha)</name>
    <name type="common">FV-3</name>
    <dbReference type="NCBI Taxonomy" id="654924"/>
    <lineage>
        <taxon>Viruses</taxon>
        <taxon>Varidnaviria</taxon>
        <taxon>Bamfordvirae</taxon>
        <taxon>Nucleocytoviricota</taxon>
        <taxon>Megaviricetes</taxon>
        <taxon>Pimascovirales</taxon>
        <taxon>Iridoviridae</taxon>
        <taxon>Alphairidovirinae</taxon>
        <taxon>Ranavirus</taxon>
        <taxon>Frog virus 3</taxon>
    </lineage>
</organism>